<proteinExistence type="evidence at protein level"/>
<organism>
    <name type="scientific">Yersinia pestis</name>
    <dbReference type="NCBI Taxonomy" id="632"/>
    <lineage>
        <taxon>Bacteria</taxon>
        <taxon>Pseudomonadati</taxon>
        <taxon>Pseudomonadota</taxon>
        <taxon>Gammaproteobacteria</taxon>
        <taxon>Enterobacterales</taxon>
        <taxon>Yersiniaceae</taxon>
        <taxon>Yersinia</taxon>
    </lineage>
</organism>
<comment type="function">
    <text evidence="1">Involved in the biosynthesis of isopentenyl diphosphate (IPP) and dimethylallyl diphosphate (DMAPP), two major building blocks of isoprenoid compounds. Catalyzes the conversion of 4-diphosphocytidyl-2-C-methyl-D-erythritol 2-phosphate (CDP-ME2P) to 2-C-methyl-D-erythritol 2,4-cyclodiphosphate (ME-CPP) with a corresponding release of cytidine 5-monophosphate (CMP).</text>
</comment>
<comment type="catalytic activity">
    <reaction evidence="1">
        <text>4-CDP-2-C-methyl-D-erythritol 2-phosphate = 2-C-methyl-D-erythritol 2,4-cyclic diphosphate + CMP</text>
        <dbReference type="Rhea" id="RHEA:23864"/>
        <dbReference type="ChEBI" id="CHEBI:57919"/>
        <dbReference type="ChEBI" id="CHEBI:58483"/>
        <dbReference type="ChEBI" id="CHEBI:60377"/>
        <dbReference type="EC" id="4.6.1.12"/>
    </reaction>
</comment>
<comment type="cofactor">
    <cofactor evidence="1">
        <name>a divalent metal cation</name>
        <dbReference type="ChEBI" id="CHEBI:60240"/>
    </cofactor>
    <text evidence="1">Binds 1 divalent metal cation per subunit.</text>
</comment>
<comment type="pathway">
    <text evidence="1">Isoprenoid biosynthesis; isopentenyl diphosphate biosynthesis via DXP pathway; isopentenyl diphosphate from 1-deoxy-D-xylulose 5-phosphate: step 4/6.</text>
</comment>
<comment type="subunit">
    <text evidence="1">Homotrimer.</text>
</comment>
<comment type="similarity">
    <text evidence="1 2">Belongs to the IspF family.</text>
</comment>
<comment type="sequence caution" evidence="2">
    <conflict type="erroneous initiation">
        <sequence resource="EMBL-CDS" id="AAM84414"/>
    </conflict>
    <text>Extended N-terminus.</text>
</comment>
<comment type="sequence caution" evidence="2">
    <conflict type="erroneous initiation">
        <sequence resource="EMBL-CDS" id="AAS60600"/>
    </conflict>
    <text>Extended N-terminus.</text>
</comment>
<feature type="chain" id="PRO_0000189523" description="2-C-methyl-D-erythritol 2,4-cyclodiphosphate synthase">
    <location>
        <begin position="1"/>
        <end position="162"/>
    </location>
</feature>
<feature type="binding site" evidence="1">
    <location>
        <begin position="8"/>
        <end position="10"/>
    </location>
    <ligand>
        <name>4-CDP-2-C-methyl-D-erythritol 2-phosphate</name>
        <dbReference type="ChEBI" id="CHEBI:57919"/>
    </ligand>
</feature>
<feature type="binding site" evidence="1">
    <location>
        <position position="8"/>
    </location>
    <ligand>
        <name>a divalent metal cation</name>
        <dbReference type="ChEBI" id="CHEBI:60240"/>
    </ligand>
</feature>
<feature type="binding site" evidence="1">
    <location>
        <position position="10"/>
    </location>
    <ligand>
        <name>a divalent metal cation</name>
        <dbReference type="ChEBI" id="CHEBI:60240"/>
    </ligand>
</feature>
<feature type="binding site" evidence="1">
    <location>
        <begin position="36"/>
        <end position="37"/>
    </location>
    <ligand>
        <name>4-CDP-2-C-methyl-D-erythritol 2-phosphate</name>
        <dbReference type="ChEBI" id="CHEBI:57919"/>
    </ligand>
</feature>
<feature type="binding site" evidence="1">
    <location>
        <position position="44"/>
    </location>
    <ligand>
        <name>a divalent metal cation</name>
        <dbReference type="ChEBI" id="CHEBI:60240"/>
    </ligand>
</feature>
<feature type="binding site" evidence="1">
    <location>
        <begin position="58"/>
        <end position="60"/>
    </location>
    <ligand>
        <name>4-CDP-2-C-methyl-D-erythritol 2-phosphate</name>
        <dbReference type="ChEBI" id="CHEBI:57919"/>
    </ligand>
</feature>
<feature type="binding site" evidence="1">
    <location>
        <begin position="63"/>
        <end position="67"/>
    </location>
    <ligand>
        <name>4-CDP-2-C-methyl-D-erythritol 2-phosphate</name>
        <dbReference type="ChEBI" id="CHEBI:57919"/>
    </ligand>
</feature>
<feature type="binding site" evidence="1">
    <location>
        <begin position="102"/>
        <end position="108"/>
    </location>
    <ligand>
        <name>4-CDP-2-C-methyl-D-erythritol 2-phosphate</name>
        <dbReference type="ChEBI" id="CHEBI:57919"/>
    </ligand>
</feature>
<feature type="binding site" evidence="1">
    <location>
        <begin position="134"/>
        <end position="137"/>
    </location>
    <ligand>
        <name>4-CDP-2-C-methyl-D-erythritol 2-phosphate</name>
        <dbReference type="ChEBI" id="CHEBI:57919"/>
    </ligand>
</feature>
<feature type="binding site" evidence="1">
    <location>
        <position position="141"/>
    </location>
    <ligand>
        <name>4-CDP-2-C-methyl-D-erythritol 2-phosphate</name>
        <dbReference type="ChEBI" id="CHEBI:57919"/>
    </ligand>
</feature>
<feature type="binding site" evidence="1">
    <location>
        <position position="144"/>
    </location>
    <ligand>
        <name>4-CDP-2-C-methyl-D-erythritol 2-phosphate</name>
        <dbReference type="ChEBI" id="CHEBI:57919"/>
    </ligand>
</feature>
<feature type="site" description="Transition state stabilizer" evidence="1">
    <location>
        <position position="36"/>
    </location>
</feature>
<feature type="site" description="Transition state stabilizer" evidence="1">
    <location>
        <position position="135"/>
    </location>
</feature>
<feature type="strand" evidence="3">
    <location>
        <begin position="1"/>
        <end position="12"/>
    </location>
</feature>
<feature type="strand" evidence="3">
    <location>
        <begin position="20"/>
        <end position="22"/>
    </location>
</feature>
<feature type="strand" evidence="3">
    <location>
        <begin position="25"/>
        <end position="27"/>
    </location>
</feature>
<feature type="helix" evidence="3">
    <location>
        <begin position="41"/>
        <end position="53"/>
    </location>
</feature>
<feature type="helix" evidence="3">
    <location>
        <begin position="59"/>
        <end position="62"/>
    </location>
</feature>
<feature type="helix" evidence="3">
    <location>
        <begin position="68"/>
        <end position="70"/>
    </location>
</feature>
<feature type="helix" evidence="3">
    <location>
        <begin position="75"/>
        <end position="88"/>
    </location>
</feature>
<feature type="strand" evidence="3">
    <location>
        <begin position="91"/>
        <end position="101"/>
    </location>
</feature>
<feature type="strand" evidence="3">
    <location>
        <begin position="103"/>
        <end position="105"/>
    </location>
</feature>
<feature type="helix" evidence="3">
    <location>
        <begin position="108"/>
        <end position="110"/>
    </location>
</feature>
<feature type="helix" evidence="3">
    <location>
        <begin position="111"/>
        <end position="121"/>
    </location>
</feature>
<feature type="helix" evidence="3">
    <location>
        <begin position="126"/>
        <end position="128"/>
    </location>
</feature>
<feature type="strand" evidence="3">
    <location>
        <begin position="129"/>
        <end position="134"/>
    </location>
</feature>
<feature type="helix" evidence="3">
    <location>
        <begin position="140"/>
        <end position="143"/>
    </location>
</feature>
<feature type="strand" evidence="3">
    <location>
        <begin position="146"/>
        <end position="158"/>
    </location>
</feature>
<accession>Q8ZBP7</accession>
<accession>Q0WBT5</accession>
<protein>
    <recommendedName>
        <fullName evidence="1">2-C-methyl-D-erythritol 2,4-cyclodiphosphate synthase</fullName>
        <shortName evidence="1">MECDP-synthase</shortName>
        <shortName evidence="1">MECPP-synthase</shortName>
        <shortName evidence="1">MECPS</shortName>
        <ecNumber evidence="1">4.6.1.12</ecNumber>
    </recommendedName>
</protein>
<gene>
    <name evidence="1" type="primary">ispF</name>
    <name type="ordered locus">YPO3360</name>
    <name type="ordered locus">y0829</name>
    <name type="ordered locus">YP_0327</name>
</gene>
<name>ISPF_YERPE</name>
<evidence type="ECO:0000255" key="1">
    <source>
        <dbReference type="HAMAP-Rule" id="MF_00107"/>
    </source>
</evidence>
<evidence type="ECO:0000305" key="2"/>
<evidence type="ECO:0007829" key="3">
    <source>
        <dbReference type="PDB" id="3FPI"/>
    </source>
</evidence>
<reference key="1">
    <citation type="journal article" date="2001" name="Nature">
        <title>Genome sequence of Yersinia pestis, the causative agent of plague.</title>
        <authorList>
            <person name="Parkhill J."/>
            <person name="Wren B.W."/>
            <person name="Thomson N.R."/>
            <person name="Titball R.W."/>
            <person name="Holden M.T.G."/>
            <person name="Prentice M.B."/>
            <person name="Sebaihia M."/>
            <person name="James K.D."/>
            <person name="Churcher C.M."/>
            <person name="Mungall K.L."/>
            <person name="Baker S."/>
            <person name="Basham D."/>
            <person name="Bentley S.D."/>
            <person name="Brooks K."/>
            <person name="Cerdeno-Tarraga A.-M."/>
            <person name="Chillingworth T."/>
            <person name="Cronin A."/>
            <person name="Davies R.M."/>
            <person name="Davis P."/>
            <person name="Dougan G."/>
            <person name="Feltwell T."/>
            <person name="Hamlin N."/>
            <person name="Holroyd S."/>
            <person name="Jagels K."/>
            <person name="Karlyshev A.V."/>
            <person name="Leather S."/>
            <person name="Moule S."/>
            <person name="Oyston P.C.F."/>
            <person name="Quail M.A."/>
            <person name="Rutherford K.M."/>
            <person name="Simmonds M."/>
            <person name="Skelton J."/>
            <person name="Stevens K."/>
            <person name="Whitehead S."/>
            <person name="Barrell B.G."/>
        </authorList>
    </citation>
    <scope>NUCLEOTIDE SEQUENCE [LARGE SCALE GENOMIC DNA]</scope>
    <source>
        <strain>CO-92 / Biovar Orientalis</strain>
    </source>
</reference>
<reference key="2">
    <citation type="journal article" date="2002" name="J. Bacteriol.">
        <title>Genome sequence of Yersinia pestis KIM.</title>
        <authorList>
            <person name="Deng W."/>
            <person name="Burland V."/>
            <person name="Plunkett G. III"/>
            <person name="Boutin A."/>
            <person name="Mayhew G.F."/>
            <person name="Liss P."/>
            <person name="Perna N.T."/>
            <person name="Rose D.J."/>
            <person name="Mau B."/>
            <person name="Zhou S."/>
            <person name="Schwartz D.C."/>
            <person name="Fetherston J.D."/>
            <person name="Lindler L.E."/>
            <person name="Brubaker R.R."/>
            <person name="Plano G.V."/>
            <person name="Straley S.C."/>
            <person name="McDonough K.A."/>
            <person name="Nilles M.L."/>
            <person name="Matson J.S."/>
            <person name="Blattner F.R."/>
            <person name="Perry R.D."/>
        </authorList>
    </citation>
    <scope>NUCLEOTIDE SEQUENCE [LARGE SCALE GENOMIC DNA]</scope>
    <source>
        <strain>KIM10+ / Biovar Mediaevalis</strain>
    </source>
</reference>
<reference key="3">
    <citation type="journal article" date="2004" name="DNA Res.">
        <title>Complete genome sequence of Yersinia pestis strain 91001, an isolate avirulent to humans.</title>
        <authorList>
            <person name="Song Y."/>
            <person name="Tong Z."/>
            <person name="Wang J."/>
            <person name="Wang L."/>
            <person name="Guo Z."/>
            <person name="Han Y."/>
            <person name="Zhang J."/>
            <person name="Pei D."/>
            <person name="Zhou D."/>
            <person name="Qin H."/>
            <person name="Pang X."/>
            <person name="Han Y."/>
            <person name="Zhai J."/>
            <person name="Li M."/>
            <person name="Cui B."/>
            <person name="Qi Z."/>
            <person name="Jin L."/>
            <person name="Dai R."/>
            <person name="Chen F."/>
            <person name="Li S."/>
            <person name="Ye C."/>
            <person name="Du Z."/>
            <person name="Lin W."/>
            <person name="Wang J."/>
            <person name="Yu J."/>
            <person name="Yang H."/>
            <person name="Wang J."/>
            <person name="Huang P."/>
            <person name="Yang R."/>
        </authorList>
    </citation>
    <scope>NUCLEOTIDE SEQUENCE [LARGE SCALE GENOMIC DNA]</scope>
    <source>
        <strain>91001 / Biovar Mediaevalis</strain>
    </source>
</reference>
<reference key="4">
    <citation type="submission" date="2008-11" db="PDB data bank">
        <title>Crystal structure of 2-C-methyl-D-erythritol 2,4-cyclodiphosphate synthase IspF from Yersinia pestis.</title>
        <authorList>
            <person name="Kim Y."/>
            <person name="Maltseva N."/>
            <person name="Stam J."/>
            <person name="Anderson W.F."/>
            <person name="Joachimiak A."/>
        </authorList>
    </citation>
    <scope>X-RAY CRYSTALLOGRAPHY (2.96 ANGSTROMS)</scope>
</reference>
<reference key="5">
    <citation type="submission" date="2009-01" db="PDB data bank">
        <title>Crystal structure of 2-C-methyl-D-erythritol 2,4-cyclodiphosphate synthase IspF complexed with cytidine triphosphate.</title>
        <authorList>
            <person name="Kim Y."/>
            <person name="Maltseva N."/>
            <person name="Stam J."/>
            <person name="Anderson W.F."/>
            <person name="Joachimiak A."/>
        </authorList>
    </citation>
    <scope>X-RAY CRYSTALLOGRAPHY (2.80 ANGSTROMS) IN COMPLEX WITH SUBSTRATE ANALOGS</scope>
</reference>
<dbReference type="EC" id="4.6.1.12" evidence="1"/>
<dbReference type="EMBL" id="AL590842">
    <property type="protein sequence ID" value="CAL21949.1"/>
    <property type="molecule type" value="Genomic_DNA"/>
</dbReference>
<dbReference type="EMBL" id="AE009952">
    <property type="protein sequence ID" value="AAM84414.1"/>
    <property type="status" value="ALT_INIT"/>
    <property type="molecule type" value="Genomic_DNA"/>
</dbReference>
<dbReference type="EMBL" id="AE017042">
    <property type="protein sequence ID" value="AAS60600.1"/>
    <property type="status" value="ALT_INIT"/>
    <property type="molecule type" value="Genomic_DNA"/>
</dbReference>
<dbReference type="PIR" id="AB0408">
    <property type="entry name" value="AB0408"/>
</dbReference>
<dbReference type="RefSeq" id="WP_002209392.1">
    <property type="nucleotide sequence ID" value="NZ_WUCM01000008.1"/>
</dbReference>
<dbReference type="RefSeq" id="YP_002348253.1">
    <property type="nucleotide sequence ID" value="NC_003143.1"/>
</dbReference>
<dbReference type="PDB" id="3F6M">
    <property type="method" value="X-ray"/>
    <property type="resolution" value="2.96 A"/>
    <property type="chains" value="A=1-162"/>
</dbReference>
<dbReference type="PDB" id="3FPI">
    <property type="method" value="X-ray"/>
    <property type="resolution" value="2.80 A"/>
    <property type="chains" value="A=1-162"/>
</dbReference>
<dbReference type="PDBsum" id="3F6M"/>
<dbReference type="PDBsum" id="3FPI"/>
<dbReference type="SMR" id="Q8ZBP7"/>
<dbReference type="STRING" id="214092.YPO3360"/>
<dbReference type="PaxDb" id="214092-YPO3360"/>
<dbReference type="DNASU" id="1145776"/>
<dbReference type="EnsemblBacteria" id="AAS60600">
    <property type="protein sequence ID" value="AAS60600"/>
    <property type="gene ID" value="YP_0327"/>
</dbReference>
<dbReference type="GeneID" id="96664269"/>
<dbReference type="KEGG" id="ype:YPO3360"/>
<dbReference type="KEGG" id="ypk:y0829"/>
<dbReference type="KEGG" id="ypm:YP_0327"/>
<dbReference type="PATRIC" id="fig|214092.21.peg.3837"/>
<dbReference type="eggNOG" id="COG0245">
    <property type="taxonomic scope" value="Bacteria"/>
</dbReference>
<dbReference type="HOGENOM" id="CLU_084630_2_0_6"/>
<dbReference type="OMA" id="LIHAIMD"/>
<dbReference type="OrthoDB" id="9804336at2"/>
<dbReference type="UniPathway" id="UPA00056">
    <property type="reaction ID" value="UER00095"/>
</dbReference>
<dbReference type="EvolutionaryTrace" id="Q8ZBP7"/>
<dbReference type="Proteomes" id="UP000000815">
    <property type="component" value="Chromosome"/>
</dbReference>
<dbReference type="Proteomes" id="UP000001019">
    <property type="component" value="Chromosome"/>
</dbReference>
<dbReference type="Proteomes" id="UP000002490">
    <property type="component" value="Chromosome"/>
</dbReference>
<dbReference type="GO" id="GO:0008685">
    <property type="term" value="F:2-C-methyl-D-erythritol 2,4-cyclodiphosphate synthase activity"/>
    <property type="evidence" value="ECO:0000318"/>
    <property type="project" value="GO_Central"/>
</dbReference>
<dbReference type="GO" id="GO:0046872">
    <property type="term" value="F:metal ion binding"/>
    <property type="evidence" value="ECO:0007669"/>
    <property type="project" value="UniProtKB-KW"/>
</dbReference>
<dbReference type="GO" id="GO:0019288">
    <property type="term" value="P:isopentenyl diphosphate biosynthetic process, methylerythritol 4-phosphate pathway"/>
    <property type="evidence" value="ECO:0007669"/>
    <property type="project" value="UniProtKB-UniRule"/>
</dbReference>
<dbReference type="GO" id="GO:0016114">
    <property type="term" value="P:terpenoid biosynthetic process"/>
    <property type="evidence" value="ECO:0007669"/>
    <property type="project" value="InterPro"/>
</dbReference>
<dbReference type="CDD" id="cd00554">
    <property type="entry name" value="MECDP_synthase"/>
    <property type="match status" value="1"/>
</dbReference>
<dbReference type="FunFam" id="3.30.1330.50:FF:000001">
    <property type="entry name" value="2-C-methyl-D-erythritol 2,4-cyclodiphosphate synthase"/>
    <property type="match status" value="1"/>
</dbReference>
<dbReference type="Gene3D" id="3.30.1330.50">
    <property type="entry name" value="2-C-methyl-D-erythritol 2,4-cyclodiphosphate synthase"/>
    <property type="match status" value="1"/>
</dbReference>
<dbReference type="HAMAP" id="MF_00107">
    <property type="entry name" value="IspF"/>
    <property type="match status" value="1"/>
</dbReference>
<dbReference type="InterPro" id="IPR003526">
    <property type="entry name" value="MECDP_synthase"/>
</dbReference>
<dbReference type="InterPro" id="IPR020555">
    <property type="entry name" value="MECDP_synthase_CS"/>
</dbReference>
<dbReference type="InterPro" id="IPR036571">
    <property type="entry name" value="MECDP_synthase_sf"/>
</dbReference>
<dbReference type="NCBIfam" id="TIGR00151">
    <property type="entry name" value="ispF"/>
    <property type="match status" value="1"/>
</dbReference>
<dbReference type="PANTHER" id="PTHR43181">
    <property type="entry name" value="2-C-METHYL-D-ERYTHRITOL 2,4-CYCLODIPHOSPHATE SYNTHASE, CHLOROPLASTIC"/>
    <property type="match status" value="1"/>
</dbReference>
<dbReference type="PANTHER" id="PTHR43181:SF1">
    <property type="entry name" value="2-C-METHYL-D-ERYTHRITOL 2,4-CYCLODIPHOSPHATE SYNTHASE, CHLOROPLASTIC"/>
    <property type="match status" value="1"/>
</dbReference>
<dbReference type="Pfam" id="PF02542">
    <property type="entry name" value="YgbB"/>
    <property type="match status" value="1"/>
</dbReference>
<dbReference type="SUPFAM" id="SSF69765">
    <property type="entry name" value="IpsF-like"/>
    <property type="match status" value="1"/>
</dbReference>
<dbReference type="PROSITE" id="PS01350">
    <property type="entry name" value="ISPF"/>
    <property type="match status" value="1"/>
</dbReference>
<keyword id="KW-0002">3D-structure</keyword>
<keyword id="KW-0414">Isoprene biosynthesis</keyword>
<keyword id="KW-0456">Lyase</keyword>
<keyword id="KW-0479">Metal-binding</keyword>
<keyword id="KW-1185">Reference proteome</keyword>
<sequence>MRIGHGFDVHKFGENGSGPLIIGGVRIPYEKGLLAHSDGDVALHAATDALLGAAALGDIGKLFPDTDPAFKGADSRGLLREAYRRILAKGYKLGNLDITIIAQAPKMAPHIPQMRVNLAEDLQCHMDDINVKATTTEQLGFTGRGEGIACEAVVLLVNVEQG</sequence>